<accession>O50302</accession>
<reference key="1">
    <citation type="journal article" date="1998" name="Folia Biol. (Praha)">
        <title>The pyrAb gene coding for the large subunit of carbamoylphosphate synthetase from Bacillus stearothermophilus: molecular cloning and functional characterization.</title>
        <authorList>
            <person name="Vlaskova H."/>
            <person name="Krasny L."/>
            <person name="Fucik V."/>
            <person name="Jonak J."/>
        </authorList>
    </citation>
    <scope>NUCLEOTIDE SEQUENCE [GENOMIC DNA]</scope>
    <source>
        <strain>ATCC 12977 / CCM 2184 / NCA 1492 / NCIMB 8920 / NRS T2026</strain>
    </source>
</reference>
<organism>
    <name type="scientific">Geobacillus stearothermophilus</name>
    <name type="common">Bacillus stearothermophilus</name>
    <dbReference type="NCBI Taxonomy" id="1422"/>
    <lineage>
        <taxon>Bacteria</taxon>
        <taxon>Bacillati</taxon>
        <taxon>Bacillota</taxon>
        <taxon>Bacilli</taxon>
        <taxon>Bacillales</taxon>
        <taxon>Anoxybacillaceae</taxon>
        <taxon>Geobacillus</taxon>
    </lineage>
</organism>
<name>CARB_GEOSE</name>
<evidence type="ECO:0000255" key="1">
    <source>
        <dbReference type="HAMAP-Rule" id="MF_01210"/>
    </source>
</evidence>
<evidence type="ECO:0000305" key="2"/>
<protein>
    <recommendedName>
        <fullName evidence="2">Carbamoyl phosphate synthase pyrimidine-specific large chain</fullName>
        <ecNumber evidence="1">6.3.4.16</ecNumber>
        <ecNumber evidence="1">6.3.5.5</ecNumber>
    </recommendedName>
    <alternativeName>
        <fullName evidence="1">Carbamoyl phosphate synthetase ammonia chain</fullName>
    </alternativeName>
</protein>
<feature type="chain" id="PRO_0000459177" description="Carbamoyl phosphate synthase pyrimidine-specific large chain">
    <location>
        <begin position="1"/>
        <end position="1064"/>
    </location>
</feature>
<feature type="domain" description="ATP-grasp 1" evidence="1">
    <location>
        <begin position="133"/>
        <end position="327"/>
    </location>
</feature>
<feature type="domain" description="ATP-grasp 2" evidence="1">
    <location>
        <begin position="671"/>
        <end position="861"/>
    </location>
</feature>
<feature type="domain" description="MGS-like" evidence="1">
    <location>
        <begin position="930"/>
        <end position="1064"/>
    </location>
</feature>
<feature type="region of interest" description="Carboxyphosphate synthetic domain" evidence="1">
    <location>
        <begin position="1"/>
        <end position="401"/>
    </location>
</feature>
<feature type="region of interest" description="Oligomerization domain" evidence="1">
    <location>
        <begin position="402"/>
        <end position="546"/>
    </location>
</feature>
<feature type="region of interest" description="Carbamoyl phosphate synthetic domain" evidence="1">
    <location>
        <begin position="547"/>
        <end position="929"/>
    </location>
</feature>
<feature type="region of interest" description="Allosteric domain" evidence="1">
    <location>
        <begin position="930"/>
        <end position="1064"/>
    </location>
</feature>
<feature type="binding site" evidence="1">
    <location>
        <position position="129"/>
    </location>
    <ligand>
        <name>ATP</name>
        <dbReference type="ChEBI" id="CHEBI:30616"/>
        <label>1</label>
    </ligand>
</feature>
<feature type="binding site" evidence="1">
    <location>
        <position position="169"/>
    </location>
    <ligand>
        <name>ATP</name>
        <dbReference type="ChEBI" id="CHEBI:30616"/>
        <label>1</label>
    </ligand>
</feature>
<feature type="binding site" evidence="1">
    <location>
        <position position="175"/>
    </location>
    <ligand>
        <name>ATP</name>
        <dbReference type="ChEBI" id="CHEBI:30616"/>
        <label>1</label>
    </ligand>
</feature>
<feature type="binding site" evidence="1">
    <location>
        <position position="176"/>
    </location>
    <ligand>
        <name>ATP</name>
        <dbReference type="ChEBI" id="CHEBI:30616"/>
        <label>1</label>
    </ligand>
</feature>
<feature type="binding site" evidence="1">
    <location>
        <position position="208"/>
    </location>
    <ligand>
        <name>ATP</name>
        <dbReference type="ChEBI" id="CHEBI:30616"/>
        <label>1</label>
    </ligand>
</feature>
<feature type="binding site" evidence="1">
    <location>
        <position position="210"/>
    </location>
    <ligand>
        <name>ATP</name>
        <dbReference type="ChEBI" id="CHEBI:30616"/>
        <label>1</label>
    </ligand>
</feature>
<feature type="binding site" evidence="1">
    <location>
        <position position="241"/>
    </location>
    <ligand>
        <name>ATP</name>
        <dbReference type="ChEBI" id="CHEBI:30616"/>
        <label>1</label>
    </ligand>
</feature>
<feature type="binding site" evidence="1">
    <location>
        <position position="242"/>
    </location>
    <ligand>
        <name>ATP</name>
        <dbReference type="ChEBI" id="CHEBI:30616"/>
        <label>1</label>
    </ligand>
</feature>
<feature type="binding site" evidence="1">
    <location>
        <position position="243"/>
    </location>
    <ligand>
        <name>ATP</name>
        <dbReference type="ChEBI" id="CHEBI:30616"/>
        <label>1</label>
    </ligand>
</feature>
<feature type="binding site" evidence="1">
    <location>
        <position position="284"/>
    </location>
    <ligand>
        <name>ATP</name>
        <dbReference type="ChEBI" id="CHEBI:30616"/>
        <label>1</label>
    </ligand>
</feature>
<feature type="binding site" evidence="1">
    <location>
        <position position="284"/>
    </location>
    <ligand>
        <name>Mg(2+)</name>
        <dbReference type="ChEBI" id="CHEBI:18420"/>
        <label>1</label>
    </ligand>
</feature>
<feature type="binding site" evidence="1">
    <location>
        <position position="284"/>
    </location>
    <ligand>
        <name>Mn(2+)</name>
        <dbReference type="ChEBI" id="CHEBI:29035"/>
        <label>1</label>
    </ligand>
</feature>
<feature type="binding site" evidence="1">
    <location>
        <position position="298"/>
    </location>
    <ligand>
        <name>ATP</name>
        <dbReference type="ChEBI" id="CHEBI:30616"/>
        <label>1</label>
    </ligand>
</feature>
<feature type="binding site" evidence="1">
    <location>
        <position position="298"/>
    </location>
    <ligand>
        <name>Mg(2+)</name>
        <dbReference type="ChEBI" id="CHEBI:18420"/>
        <label>1</label>
    </ligand>
</feature>
<feature type="binding site" evidence="1">
    <location>
        <position position="298"/>
    </location>
    <ligand>
        <name>Mg(2+)</name>
        <dbReference type="ChEBI" id="CHEBI:18420"/>
        <label>2</label>
    </ligand>
</feature>
<feature type="binding site" evidence="1">
    <location>
        <position position="298"/>
    </location>
    <ligand>
        <name>Mn(2+)</name>
        <dbReference type="ChEBI" id="CHEBI:29035"/>
        <label>1</label>
    </ligand>
</feature>
<feature type="binding site" evidence="1">
    <location>
        <position position="298"/>
    </location>
    <ligand>
        <name>Mn(2+)</name>
        <dbReference type="ChEBI" id="CHEBI:29035"/>
        <label>2</label>
    </ligand>
</feature>
<feature type="binding site" evidence="1">
    <location>
        <position position="300"/>
    </location>
    <ligand>
        <name>Mg(2+)</name>
        <dbReference type="ChEBI" id="CHEBI:18420"/>
        <label>2</label>
    </ligand>
</feature>
<feature type="binding site" evidence="1">
    <location>
        <position position="300"/>
    </location>
    <ligand>
        <name>Mn(2+)</name>
        <dbReference type="ChEBI" id="CHEBI:29035"/>
        <label>2</label>
    </ligand>
</feature>
<feature type="binding site" evidence="1">
    <location>
        <position position="707"/>
    </location>
    <ligand>
        <name>ATP</name>
        <dbReference type="ChEBI" id="CHEBI:30616"/>
        <label>2</label>
    </ligand>
</feature>
<feature type="binding site" evidence="1">
    <location>
        <position position="746"/>
    </location>
    <ligand>
        <name>ATP</name>
        <dbReference type="ChEBI" id="CHEBI:30616"/>
        <label>2</label>
    </ligand>
</feature>
<feature type="binding site" evidence="1">
    <location>
        <position position="748"/>
    </location>
    <ligand>
        <name>ATP</name>
        <dbReference type="ChEBI" id="CHEBI:30616"/>
        <label>2</label>
    </ligand>
</feature>
<feature type="binding site" evidence="1">
    <location>
        <position position="752"/>
    </location>
    <ligand>
        <name>ATP</name>
        <dbReference type="ChEBI" id="CHEBI:30616"/>
        <label>2</label>
    </ligand>
</feature>
<feature type="binding site" evidence="1">
    <location>
        <position position="777"/>
    </location>
    <ligand>
        <name>ATP</name>
        <dbReference type="ChEBI" id="CHEBI:30616"/>
        <label>2</label>
    </ligand>
</feature>
<feature type="binding site" evidence="1">
    <location>
        <position position="778"/>
    </location>
    <ligand>
        <name>ATP</name>
        <dbReference type="ChEBI" id="CHEBI:30616"/>
        <label>2</label>
    </ligand>
</feature>
<feature type="binding site" evidence="1">
    <location>
        <position position="779"/>
    </location>
    <ligand>
        <name>ATP</name>
        <dbReference type="ChEBI" id="CHEBI:30616"/>
        <label>2</label>
    </ligand>
</feature>
<feature type="binding site" evidence="1">
    <location>
        <position position="780"/>
    </location>
    <ligand>
        <name>ATP</name>
        <dbReference type="ChEBI" id="CHEBI:30616"/>
        <label>2</label>
    </ligand>
</feature>
<feature type="binding site" evidence="1">
    <location>
        <position position="820"/>
    </location>
    <ligand>
        <name>ATP</name>
        <dbReference type="ChEBI" id="CHEBI:30616"/>
        <label>2</label>
    </ligand>
</feature>
<feature type="binding site" evidence="1">
    <location>
        <position position="820"/>
    </location>
    <ligand>
        <name>Mg(2+)</name>
        <dbReference type="ChEBI" id="CHEBI:18420"/>
        <label>3</label>
    </ligand>
</feature>
<feature type="binding site" evidence="1">
    <location>
        <position position="820"/>
    </location>
    <ligand>
        <name>Mn(2+)</name>
        <dbReference type="ChEBI" id="CHEBI:29035"/>
        <label>3</label>
    </ligand>
</feature>
<feature type="binding site" evidence="1">
    <location>
        <position position="832"/>
    </location>
    <ligand>
        <name>ATP</name>
        <dbReference type="ChEBI" id="CHEBI:30616"/>
        <label>2</label>
    </ligand>
</feature>
<feature type="binding site" evidence="1">
    <location>
        <position position="832"/>
    </location>
    <ligand>
        <name>Mg(2+)</name>
        <dbReference type="ChEBI" id="CHEBI:18420"/>
        <label>3</label>
    </ligand>
</feature>
<feature type="binding site" evidence="1">
    <location>
        <position position="832"/>
    </location>
    <ligand>
        <name>Mg(2+)</name>
        <dbReference type="ChEBI" id="CHEBI:18420"/>
        <label>4</label>
    </ligand>
</feature>
<feature type="binding site" evidence="1">
    <location>
        <position position="832"/>
    </location>
    <ligand>
        <name>Mn(2+)</name>
        <dbReference type="ChEBI" id="CHEBI:29035"/>
        <label>3</label>
    </ligand>
</feature>
<feature type="binding site" evidence="1">
    <location>
        <position position="832"/>
    </location>
    <ligand>
        <name>Mn(2+)</name>
        <dbReference type="ChEBI" id="CHEBI:29035"/>
        <label>4</label>
    </ligand>
</feature>
<feature type="binding site" evidence="1">
    <location>
        <position position="834"/>
    </location>
    <ligand>
        <name>Mg(2+)</name>
        <dbReference type="ChEBI" id="CHEBI:18420"/>
        <label>4</label>
    </ligand>
</feature>
<feature type="binding site" evidence="1">
    <location>
        <position position="834"/>
    </location>
    <ligand>
        <name>Mn(2+)</name>
        <dbReference type="ChEBI" id="CHEBI:29035"/>
        <label>4</label>
    </ligand>
</feature>
<proteinExistence type="inferred from homology"/>
<keyword id="KW-0028">Amino-acid biosynthesis</keyword>
<keyword id="KW-0055">Arginine biosynthesis</keyword>
<keyword id="KW-0067">ATP-binding</keyword>
<keyword id="KW-0436">Ligase</keyword>
<keyword id="KW-0460">Magnesium</keyword>
<keyword id="KW-0464">Manganese</keyword>
<keyword id="KW-0479">Metal-binding</keyword>
<keyword id="KW-0547">Nucleotide-binding</keyword>
<keyword id="KW-0665">Pyrimidine biosynthesis</keyword>
<keyword id="KW-0677">Repeat</keyword>
<gene>
    <name type="primary">pyrAB</name>
</gene>
<dbReference type="EC" id="6.3.4.16" evidence="1"/>
<dbReference type="EC" id="6.3.5.5" evidence="1"/>
<dbReference type="EMBL" id="AJ001805">
    <property type="protein sequence ID" value="CAA05020.1"/>
    <property type="molecule type" value="Genomic_DNA"/>
</dbReference>
<dbReference type="PIR" id="T44419">
    <property type="entry name" value="T44419"/>
</dbReference>
<dbReference type="SMR" id="O50302"/>
<dbReference type="BRENDA" id="6.3.5.5">
    <property type="organism ID" value="623"/>
</dbReference>
<dbReference type="UniPathway" id="UPA00068">
    <property type="reaction ID" value="UER00171"/>
</dbReference>
<dbReference type="UniPathway" id="UPA00070">
    <property type="reaction ID" value="UER00115"/>
</dbReference>
<dbReference type="GO" id="GO:0005737">
    <property type="term" value="C:cytoplasm"/>
    <property type="evidence" value="ECO:0007669"/>
    <property type="project" value="TreeGrafter"/>
</dbReference>
<dbReference type="GO" id="GO:0005524">
    <property type="term" value="F:ATP binding"/>
    <property type="evidence" value="ECO:0007669"/>
    <property type="project" value="UniProtKB-UniRule"/>
</dbReference>
<dbReference type="GO" id="GO:0004087">
    <property type="term" value="F:carbamoyl-phosphate synthase (ammonia) activity"/>
    <property type="evidence" value="ECO:0007669"/>
    <property type="project" value="RHEA"/>
</dbReference>
<dbReference type="GO" id="GO:0004088">
    <property type="term" value="F:carbamoyl-phosphate synthase (glutamine-hydrolyzing) activity"/>
    <property type="evidence" value="ECO:0007669"/>
    <property type="project" value="UniProtKB-UniRule"/>
</dbReference>
<dbReference type="GO" id="GO:0046872">
    <property type="term" value="F:metal ion binding"/>
    <property type="evidence" value="ECO:0007669"/>
    <property type="project" value="UniProtKB-KW"/>
</dbReference>
<dbReference type="GO" id="GO:0044205">
    <property type="term" value="P:'de novo' UMP biosynthetic process"/>
    <property type="evidence" value="ECO:0007669"/>
    <property type="project" value="UniProtKB-UniRule"/>
</dbReference>
<dbReference type="GO" id="GO:0006541">
    <property type="term" value="P:glutamine metabolic process"/>
    <property type="evidence" value="ECO:0007669"/>
    <property type="project" value="TreeGrafter"/>
</dbReference>
<dbReference type="GO" id="GO:0006526">
    <property type="term" value="P:L-arginine biosynthetic process"/>
    <property type="evidence" value="ECO:0007669"/>
    <property type="project" value="UniProtKB-UniRule"/>
</dbReference>
<dbReference type="CDD" id="cd01424">
    <property type="entry name" value="MGS_CPS_II"/>
    <property type="match status" value="1"/>
</dbReference>
<dbReference type="FunFam" id="1.10.1030.10:FF:000002">
    <property type="entry name" value="Carbamoyl-phosphate synthase large chain"/>
    <property type="match status" value="1"/>
</dbReference>
<dbReference type="FunFam" id="3.30.1490.20:FF:000001">
    <property type="entry name" value="Carbamoyl-phosphate synthase large chain"/>
    <property type="match status" value="1"/>
</dbReference>
<dbReference type="FunFam" id="3.30.470.20:FF:000001">
    <property type="entry name" value="Carbamoyl-phosphate synthase large chain"/>
    <property type="match status" value="1"/>
</dbReference>
<dbReference type="FunFam" id="3.30.470.20:FF:000026">
    <property type="entry name" value="Carbamoyl-phosphate synthase large chain"/>
    <property type="match status" value="1"/>
</dbReference>
<dbReference type="FunFam" id="3.40.50.1380:FF:000011">
    <property type="entry name" value="Carbamoyl-phosphate synthase large chain"/>
    <property type="match status" value="1"/>
</dbReference>
<dbReference type="FunFam" id="3.40.50.20:FF:000001">
    <property type="entry name" value="Carbamoyl-phosphate synthase large chain"/>
    <property type="match status" value="2"/>
</dbReference>
<dbReference type="Gene3D" id="3.40.50.20">
    <property type="match status" value="2"/>
</dbReference>
<dbReference type="Gene3D" id="3.30.1490.20">
    <property type="entry name" value="ATP-grasp fold, A domain"/>
    <property type="match status" value="1"/>
</dbReference>
<dbReference type="Gene3D" id="3.30.470.20">
    <property type="entry name" value="ATP-grasp fold, B domain"/>
    <property type="match status" value="2"/>
</dbReference>
<dbReference type="Gene3D" id="1.10.1030.10">
    <property type="entry name" value="Carbamoyl-phosphate synthetase, large subunit oligomerisation domain"/>
    <property type="match status" value="1"/>
</dbReference>
<dbReference type="Gene3D" id="3.40.50.1380">
    <property type="entry name" value="Methylglyoxal synthase-like domain"/>
    <property type="match status" value="1"/>
</dbReference>
<dbReference type="HAMAP" id="MF_01210_A">
    <property type="entry name" value="CPSase_L_chain_A"/>
    <property type="match status" value="1"/>
</dbReference>
<dbReference type="HAMAP" id="MF_01210_B">
    <property type="entry name" value="CPSase_L_chain_B"/>
    <property type="match status" value="1"/>
</dbReference>
<dbReference type="InterPro" id="IPR011761">
    <property type="entry name" value="ATP-grasp"/>
</dbReference>
<dbReference type="InterPro" id="IPR013815">
    <property type="entry name" value="ATP_grasp_subdomain_1"/>
</dbReference>
<dbReference type="InterPro" id="IPR006275">
    <property type="entry name" value="CarbamoylP_synth_lsu"/>
</dbReference>
<dbReference type="InterPro" id="IPR005480">
    <property type="entry name" value="CarbamoylP_synth_lsu_oligo"/>
</dbReference>
<dbReference type="InterPro" id="IPR036897">
    <property type="entry name" value="CarbamoylP_synth_lsu_oligo_sf"/>
</dbReference>
<dbReference type="InterPro" id="IPR005479">
    <property type="entry name" value="CbamoylP_synth_lsu-like_ATP-bd"/>
</dbReference>
<dbReference type="InterPro" id="IPR005483">
    <property type="entry name" value="CbamoylP_synth_lsu_CPSase_dom"/>
</dbReference>
<dbReference type="InterPro" id="IPR011607">
    <property type="entry name" value="MGS-like_dom"/>
</dbReference>
<dbReference type="InterPro" id="IPR036914">
    <property type="entry name" value="MGS-like_dom_sf"/>
</dbReference>
<dbReference type="InterPro" id="IPR033937">
    <property type="entry name" value="MGS_CPS_CarB"/>
</dbReference>
<dbReference type="InterPro" id="IPR016185">
    <property type="entry name" value="PreATP-grasp_dom_sf"/>
</dbReference>
<dbReference type="NCBIfam" id="TIGR01369">
    <property type="entry name" value="CPSaseII_lrg"/>
    <property type="match status" value="1"/>
</dbReference>
<dbReference type="NCBIfam" id="NF003671">
    <property type="entry name" value="PRK05294.1"/>
    <property type="match status" value="1"/>
</dbReference>
<dbReference type="NCBIfam" id="NF009455">
    <property type="entry name" value="PRK12815.1"/>
    <property type="match status" value="1"/>
</dbReference>
<dbReference type="PANTHER" id="PTHR11405:SF53">
    <property type="entry name" value="CARBAMOYL-PHOSPHATE SYNTHASE [AMMONIA], MITOCHONDRIAL"/>
    <property type="match status" value="1"/>
</dbReference>
<dbReference type="PANTHER" id="PTHR11405">
    <property type="entry name" value="CARBAMOYLTRANSFERASE FAMILY MEMBER"/>
    <property type="match status" value="1"/>
</dbReference>
<dbReference type="Pfam" id="PF02786">
    <property type="entry name" value="CPSase_L_D2"/>
    <property type="match status" value="2"/>
</dbReference>
<dbReference type="Pfam" id="PF02787">
    <property type="entry name" value="CPSase_L_D3"/>
    <property type="match status" value="1"/>
</dbReference>
<dbReference type="Pfam" id="PF02142">
    <property type="entry name" value="MGS"/>
    <property type="match status" value="1"/>
</dbReference>
<dbReference type="PRINTS" id="PR00098">
    <property type="entry name" value="CPSASE"/>
</dbReference>
<dbReference type="SMART" id="SM01096">
    <property type="entry name" value="CPSase_L_D3"/>
    <property type="match status" value="1"/>
</dbReference>
<dbReference type="SMART" id="SM00851">
    <property type="entry name" value="MGS"/>
    <property type="match status" value="1"/>
</dbReference>
<dbReference type="SUPFAM" id="SSF48108">
    <property type="entry name" value="Carbamoyl phosphate synthetase, large subunit connection domain"/>
    <property type="match status" value="1"/>
</dbReference>
<dbReference type="SUPFAM" id="SSF56059">
    <property type="entry name" value="Glutathione synthetase ATP-binding domain-like"/>
    <property type="match status" value="2"/>
</dbReference>
<dbReference type="SUPFAM" id="SSF52335">
    <property type="entry name" value="Methylglyoxal synthase-like"/>
    <property type="match status" value="1"/>
</dbReference>
<dbReference type="SUPFAM" id="SSF52440">
    <property type="entry name" value="PreATP-grasp domain"/>
    <property type="match status" value="2"/>
</dbReference>
<dbReference type="PROSITE" id="PS50975">
    <property type="entry name" value="ATP_GRASP"/>
    <property type="match status" value="2"/>
</dbReference>
<dbReference type="PROSITE" id="PS00866">
    <property type="entry name" value="CPSASE_1"/>
    <property type="match status" value="2"/>
</dbReference>
<dbReference type="PROSITE" id="PS00867">
    <property type="entry name" value="CPSASE_2"/>
    <property type="match status" value="2"/>
</dbReference>
<dbReference type="PROSITE" id="PS51855">
    <property type="entry name" value="MGS"/>
    <property type="match status" value="1"/>
</dbReference>
<comment type="function">
    <text evidence="2">Small subunit of the glutamine-dependent carbamoyl phosphate synthetase (CPSase). CPSase catalyzes the formation of carbamoyl phosphate from the ammonia moiety of glutamine, carbonate, and phosphate donated by ATP, constituting the first step of the biosynthetic pathway leading to pyrimidine nucleotides. The large subunit (synthetase) binds the substrates ammonia (free or transferred from glutamine from the small subunit), hydrogencarbonate and ATP and carries out an ATP-coupled ligase reaction, activating hydrogencarbonate by forming carboxy phosphate which reacts with ammonia to form carbamoyl phosphate.</text>
</comment>
<comment type="catalytic activity">
    <reaction evidence="1">
        <text>hydrogencarbonate + L-glutamine + 2 ATP + H2O = carbamoyl phosphate + L-glutamate + 2 ADP + phosphate + 2 H(+)</text>
        <dbReference type="Rhea" id="RHEA:18633"/>
        <dbReference type="ChEBI" id="CHEBI:15377"/>
        <dbReference type="ChEBI" id="CHEBI:15378"/>
        <dbReference type="ChEBI" id="CHEBI:17544"/>
        <dbReference type="ChEBI" id="CHEBI:29985"/>
        <dbReference type="ChEBI" id="CHEBI:30616"/>
        <dbReference type="ChEBI" id="CHEBI:43474"/>
        <dbReference type="ChEBI" id="CHEBI:58228"/>
        <dbReference type="ChEBI" id="CHEBI:58359"/>
        <dbReference type="ChEBI" id="CHEBI:456216"/>
        <dbReference type="EC" id="6.3.5.5"/>
    </reaction>
</comment>
<comment type="catalytic activity">
    <molecule>Carbamoyl phosphate synthase pyrimidine-specific large chain</molecule>
    <reaction evidence="1">
        <text>hydrogencarbonate + NH4(+) + 2 ATP = carbamoyl phosphate + 2 ADP + phosphate + 2 H(+)</text>
        <dbReference type="Rhea" id="RHEA:18029"/>
        <dbReference type="ChEBI" id="CHEBI:15378"/>
        <dbReference type="ChEBI" id="CHEBI:17544"/>
        <dbReference type="ChEBI" id="CHEBI:28938"/>
        <dbReference type="ChEBI" id="CHEBI:30616"/>
        <dbReference type="ChEBI" id="CHEBI:43474"/>
        <dbReference type="ChEBI" id="CHEBI:58228"/>
        <dbReference type="ChEBI" id="CHEBI:456216"/>
        <dbReference type="EC" id="6.3.4.16"/>
    </reaction>
</comment>
<comment type="cofactor">
    <cofactor evidence="1">
        <name>Mg(2+)</name>
        <dbReference type="ChEBI" id="CHEBI:18420"/>
    </cofactor>
    <cofactor evidence="1">
        <name>Mn(2+)</name>
        <dbReference type="ChEBI" id="CHEBI:29035"/>
    </cofactor>
    <text evidence="1">Binds 4 Mg(2+) or Mn(2+) ions per subunit.</text>
</comment>
<comment type="pathway">
    <text evidence="1">Amino-acid biosynthesis; L-arginine biosynthesis; carbamoyl phosphate from bicarbonate: step 1/1.</text>
</comment>
<comment type="pathway">
    <text evidence="1">Pyrimidine metabolism; UMP biosynthesis via de novo pathway; (S)-dihydroorotate from bicarbonate: step 1/3.</text>
</comment>
<comment type="subunit">
    <text evidence="1">Composed of two chains; the small (or glutamine) chain promotes the hydrolysis of glutamine to ammonia, which is used by the large (or ammonia) chain to synthesize carbamoyl phosphate. Tetramer of heterodimers (alpha,beta)4.</text>
</comment>
<comment type="domain">
    <text evidence="1">The large subunit is composed of 2 ATP-grasp domains that are involved in binding the 2 ATP molecules needed for carbamoyl phosphate synthesis. The N-terminal ATP-grasp domain (referred to as the carboxyphosphate synthetic component) catalyzes the ATP-dependent phosphorylation of hydrogencarbonate to carboxyphosphate and the subsequent nucleophilic attack by ammonia to form a carbamate intermediate. The C-terminal ATP-grasp domain (referred to as the carbamoyl phosphate synthetic component) then catalyzes the phosphorylation of carbamate with the second ATP to form the end product carbamoyl phosphate. The reactive and unstable enzyme intermediates are sequentially channeled from one active site to the next through the interior of the protein over a distance of at least 96 A.</text>
</comment>
<comment type="similarity">
    <text evidence="1">Belongs to the CarB family.</text>
</comment>
<sequence>MPKRRDIETILVIGSGPIVIGQAAEFDYAGTQACLALKEEGYKVILVNSNPATIMTDTEIADKVYMEPLTLDFVARIIRKERPDAILPTLGGQTGLNLAVELAKAGVLEECGVEILGTKLEAIEKAEDREQFRALMNELGEPVPESAIIHSLEEAYAFVEQIGYPVIVRPAFTLGGTGGGICTNEEELVEIVSTGLKLSPVHQCLLERSIAGYNQIEYEVMRDANDNAIVVCNMENIDPVGIHTGDSIVVAPSQTLSDREYQLLRNASLKIIRALGIEGGCNVQLALDPDSFRYYVIEVNPRVSRSSALASKATGYPIAKLAAKIAVGLTLDEMINPVTGKTYACFEPALDYVVTKIPRFPFDKFESANRRLGTQMKATGEVMSIGRTFEESLLKAVRSLEIGVHHLELNEAKTAADDVMEKRIRKAGDERLFYIAEALRRGVTVETLHEWSQIDRFFLHKIQNIIEMETVLKNHPGDLDVLKKAKGLGFSDAAIAALWNKTERDVYALRRQEGIVPVYKMVDTCAAEFTSETPYYYSTYEEENESIVTEKPSVIVLGSGPIRIGQGIEFDYATVHCVLAIKQAGYEAIIINNNPETVSTDFSTSDKLYFEPLTAEDVMHVIDLEQPVGVIVQFGGQTAINLAAELEARGVRLLGTTLEDLDRAEDRDKFEQALSELGIPKPAGKTAVSVEEAVAIAEEIGYPVLVRPSYVLGGRAMEIVYNREELLHYMEHAVRVNPQHPVLVDRYITGKEVEVDAIADGETVVIPGIMEHIERAGVHSGDSIAVYPPQTLSDDVIAKITDYTVKLARGLHIVGLLNIQFVVAGSDVYVLEVNPRSSRTVPFLSKITGVPMANLATKAILGAKLADMGYETGVCPVRPGVYVKVPVFSFAKLRNVDISLGPEMKSTGEVIGKDVTFEKALYKGLVASGIQIQPHGAVLLTVADKDKEEAVELARRFADIGYQLLATNGTAETLKAAGIPVTVVNKIHSASPNILDVIRQGKAQVVINTLTKGKQPESDGFRIRREVENGIPCLTSLDTARAMLQVLESMTFSTTAMTEGLVRS</sequence>